<gene>
    <name evidence="1" type="primary">der</name>
    <name type="synonym">engA</name>
    <name type="ordered locus">Tola_0892</name>
</gene>
<keyword id="KW-0342">GTP-binding</keyword>
<keyword id="KW-0547">Nucleotide-binding</keyword>
<keyword id="KW-1185">Reference proteome</keyword>
<keyword id="KW-0677">Repeat</keyword>
<keyword id="KW-0690">Ribosome biogenesis</keyword>
<evidence type="ECO:0000255" key="1">
    <source>
        <dbReference type="HAMAP-Rule" id="MF_00195"/>
    </source>
</evidence>
<name>DER_TOLAT</name>
<proteinExistence type="inferred from homology"/>
<accession>C4LC41</accession>
<dbReference type="EMBL" id="CP001616">
    <property type="protein sequence ID" value="ACQ92520.1"/>
    <property type="molecule type" value="Genomic_DNA"/>
</dbReference>
<dbReference type="RefSeq" id="WP_012729119.1">
    <property type="nucleotide sequence ID" value="NC_012691.1"/>
</dbReference>
<dbReference type="SMR" id="C4LC41"/>
<dbReference type="STRING" id="595494.Tola_0892"/>
<dbReference type="KEGG" id="tau:Tola_0892"/>
<dbReference type="eggNOG" id="COG1160">
    <property type="taxonomic scope" value="Bacteria"/>
</dbReference>
<dbReference type="HOGENOM" id="CLU_016077_5_1_6"/>
<dbReference type="OrthoDB" id="9805918at2"/>
<dbReference type="Proteomes" id="UP000009073">
    <property type="component" value="Chromosome"/>
</dbReference>
<dbReference type="GO" id="GO:0005525">
    <property type="term" value="F:GTP binding"/>
    <property type="evidence" value="ECO:0007669"/>
    <property type="project" value="UniProtKB-UniRule"/>
</dbReference>
<dbReference type="GO" id="GO:0043022">
    <property type="term" value="F:ribosome binding"/>
    <property type="evidence" value="ECO:0007669"/>
    <property type="project" value="TreeGrafter"/>
</dbReference>
<dbReference type="GO" id="GO:0042254">
    <property type="term" value="P:ribosome biogenesis"/>
    <property type="evidence" value="ECO:0007669"/>
    <property type="project" value="UniProtKB-KW"/>
</dbReference>
<dbReference type="CDD" id="cd01894">
    <property type="entry name" value="EngA1"/>
    <property type="match status" value="1"/>
</dbReference>
<dbReference type="CDD" id="cd01895">
    <property type="entry name" value="EngA2"/>
    <property type="match status" value="1"/>
</dbReference>
<dbReference type="FunFam" id="3.30.300.20:FF:000004">
    <property type="entry name" value="GTPase Der"/>
    <property type="match status" value="1"/>
</dbReference>
<dbReference type="FunFam" id="3.40.50.300:FF:000040">
    <property type="entry name" value="GTPase Der"/>
    <property type="match status" value="1"/>
</dbReference>
<dbReference type="FunFam" id="3.40.50.300:FF:000057">
    <property type="entry name" value="GTPase Der"/>
    <property type="match status" value="1"/>
</dbReference>
<dbReference type="Gene3D" id="3.30.300.20">
    <property type="match status" value="1"/>
</dbReference>
<dbReference type="Gene3D" id="3.40.50.300">
    <property type="entry name" value="P-loop containing nucleotide triphosphate hydrolases"/>
    <property type="match status" value="2"/>
</dbReference>
<dbReference type="HAMAP" id="MF_00195">
    <property type="entry name" value="GTPase_Der"/>
    <property type="match status" value="1"/>
</dbReference>
<dbReference type="InterPro" id="IPR031166">
    <property type="entry name" value="G_ENGA"/>
</dbReference>
<dbReference type="InterPro" id="IPR006073">
    <property type="entry name" value="GTP-bd"/>
</dbReference>
<dbReference type="InterPro" id="IPR016484">
    <property type="entry name" value="GTPase_Der"/>
</dbReference>
<dbReference type="InterPro" id="IPR032859">
    <property type="entry name" value="KH_dom-like"/>
</dbReference>
<dbReference type="InterPro" id="IPR015946">
    <property type="entry name" value="KH_dom-like_a/b"/>
</dbReference>
<dbReference type="InterPro" id="IPR027417">
    <property type="entry name" value="P-loop_NTPase"/>
</dbReference>
<dbReference type="InterPro" id="IPR005225">
    <property type="entry name" value="Small_GTP-bd"/>
</dbReference>
<dbReference type="NCBIfam" id="TIGR03594">
    <property type="entry name" value="GTPase_EngA"/>
    <property type="match status" value="1"/>
</dbReference>
<dbReference type="NCBIfam" id="TIGR00231">
    <property type="entry name" value="small_GTP"/>
    <property type="match status" value="2"/>
</dbReference>
<dbReference type="PANTHER" id="PTHR43834">
    <property type="entry name" value="GTPASE DER"/>
    <property type="match status" value="1"/>
</dbReference>
<dbReference type="PANTHER" id="PTHR43834:SF6">
    <property type="entry name" value="GTPASE DER"/>
    <property type="match status" value="1"/>
</dbReference>
<dbReference type="Pfam" id="PF14714">
    <property type="entry name" value="KH_dom-like"/>
    <property type="match status" value="1"/>
</dbReference>
<dbReference type="Pfam" id="PF01926">
    <property type="entry name" value="MMR_HSR1"/>
    <property type="match status" value="2"/>
</dbReference>
<dbReference type="PIRSF" id="PIRSF006485">
    <property type="entry name" value="GTP-binding_EngA"/>
    <property type="match status" value="1"/>
</dbReference>
<dbReference type="PRINTS" id="PR00326">
    <property type="entry name" value="GTP1OBG"/>
</dbReference>
<dbReference type="SUPFAM" id="SSF52540">
    <property type="entry name" value="P-loop containing nucleoside triphosphate hydrolases"/>
    <property type="match status" value="2"/>
</dbReference>
<dbReference type="PROSITE" id="PS51712">
    <property type="entry name" value="G_ENGA"/>
    <property type="match status" value="2"/>
</dbReference>
<sequence>MTPVVALVGRPNVGKSTLFNRLTRSRDALVADFPGLTRDRKYGQAVVDDMNFIVVDTGGIDGSEEGIEVKMAEQSLQAIDESDVVLFMVDARAGVTSADIGIANHLRRQKKKVFLVANKTDGLDGDVHCADFYSLALGEVYQIAASHGRGVTSLLEKALAPFFEELTGKSAEEEAADEDAAYWAAFEGTDVTEEDESDEELTGEDRYADLPIKFAIIGRPNVGKSTLTNRMLGEDRVIVYDLPGTTRDSIYIPLERDDQHYIVIDTAGVRKKKKIYETVEKFSVVKTLQAIEDANVVLLLIDAREGVSDQDLSLLGFTLHSGRSIVIAVNKWDGLDQDTKEKIKEDLERRLGFVDFARVHFISALHGSGVGNLFDSIQEAYRSATKRISTSMLTRIMNMAAEDHQPPLVRGRRVKLKYAHAGGYNPPRIIIHGNQVKDLPESYKRYLINYYRKSLKIMGTPIHIEFQEGDNPFEGRRNKLTQTQIRKRRRMMSFVKKG</sequence>
<comment type="function">
    <text evidence="1">GTPase that plays an essential role in the late steps of ribosome biogenesis.</text>
</comment>
<comment type="subunit">
    <text evidence="1">Associates with the 50S ribosomal subunit.</text>
</comment>
<comment type="similarity">
    <text evidence="1">Belongs to the TRAFAC class TrmE-Era-EngA-EngB-Septin-like GTPase superfamily. EngA (Der) GTPase family.</text>
</comment>
<reference key="1">
    <citation type="submission" date="2009-05" db="EMBL/GenBank/DDBJ databases">
        <title>Complete sequence of Tolumonas auensis DSM 9187.</title>
        <authorList>
            <consortium name="US DOE Joint Genome Institute"/>
            <person name="Lucas S."/>
            <person name="Copeland A."/>
            <person name="Lapidus A."/>
            <person name="Glavina del Rio T."/>
            <person name="Tice H."/>
            <person name="Bruce D."/>
            <person name="Goodwin L."/>
            <person name="Pitluck S."/>
            <person name="Chertkov O."/>
            <person name="Brettin T."/>
            <person name="Detter J.C."/>
            <person name="Han C."/>
            <person name="Larimer F."/>
            <person name="Land M."/>
            <person name="Hauser L."/>
            <person name="Kyrpides N."/>
            <person name="Mikhailova N."/>
            <person name="Spring S."/>
            <person name="Beller H."/>
        </authorList>
    </citation>
    <scope>NUCLEOTIDE SEQUENCE [LARGE SCALE GENOMIC DNA]</scope>
    <source>
        <strain>DSM 9187 / NBRC 110442 / TA 4</strain>
    </source>
</reference>
<protein>
    <recommendedName>
        <fullName evidence="1">GTPase Der</fullName>
    </recommendedName>
    <alternativeName>
        <fullName evidence="1">GTP-binding protein EngA</fullName>
    </alternativeName>
</protein>
<organism>
    <name type="scientific">Tolumonas auensis (strain DSM 9187 / NBRC 110442 / TA 4)</name>
    <dbReference type="NCBI Taxonomy" id="595494"/>
    <lineage>
        <taxon>Bacteria</taxon>
        <taxon>Pseudomonadati</taxon>
        <taxon>Pseudomonadota</taxon>
        <taxon>Gammaproteobacteria</taxon>
        <taxon>Aeromonadales</taxon>
        <taxon>Aeromonadaceae</taxon>
        <taxon>Tolumonas</taxon>
    </lineage>
</organism>
<feature type="chain" id="PRO_1000204049" description="GTPase Der">
    <location>
        <begin position="1"/>
        <end position="498"/>
    </location>
</feature>
<feature type="domain" description="EngA-type G 1">
    <location>
        <begin position="3"/>
        <end position="166"/>
    </location>
</feature>
<feature type="domain" description="EngA-type G 2">
    <location>
        <begin position="212"/>
        <end position="385"/>
    </location>
</feature>
<feature type="domain" description="KH-like" evidence="1">
    <location>
        <begin position="386"/>
        <end position="470"/>
    </location>
</feature>
<feature type="binding site" evidence="1">
    <location>
        <begin position="9"/>
        <end position="16"/>
    </location>
    <ligand>
        <name>GTP</name>
        <dbReference type="ChEBI" id="CHEBI:37565"/>
        <label>1</label>
    </ligand>
</feature>
<feature type="binding site" evidence="1">
    <location>
        <begin position="56"/>
        <end position="60"/>
    </location>
    <ligand>
        <name>GTP</name>
        <dbReference type="ChEBI" id="CHEBI:37565"/>
        <label>1</label>
    </ligand>
</feature>
<feature type="binding site" evidence="1">
    <location>
        <begin position="118"/>
        <end position="121"/>
    </location>
    <ligand>
        <name>GTP</name>
        <dbReference type="ChEBI" id="CHEBI:37565"/>
        <label>1</label>
    </ligand>
</feature>
<feature type="binding site" evidence="1">
    <location>
        <begin position="218"/>
        <end position="225"/>
    </location>
    <ligand>
        <name>GTP</name>
        <dbReference type="ChEBI" id="CHEBI:37565"/>
        <label>2</label>
    </ligand>
</feature>
<feature type="binding site" evidence="1">
    <location>
        <begin position="265"/>
        <end position="269"/>
    </location>
    <ligand>
        <name>GTP</name>
        <dbReference type="ChEBI" id="CHEBI:37565"/>
        <label>2</label>
    </ligand>
</feature>
<feature type="binding site" evidence="1">
    <location>
        <begin position="330"/>
        <end position="333"/>
    </location>
    <ligand>
        <name>GTP</name>
        <dbReference type="ChEBI" id="CHEBI:37565"/>
        <label>2</label>
    </ligand>
</feature>